<comment type="similarity">
    <text evidence="1">Belongs to the GOLGA8 family.</text>
</comment>
<feature type="chain" id="PRO_0000420861" description="Golgin subfamily A member 8N">
    <location>
        <begin position="1"/>
        <end position="632"/>
    </location>
</feature>
<feature type="region of interest" description="Disordered" evidence="2">
    <location>
        <begin position="1"/>
        <end position="76"/>
    </location>
</feature>
<feature type="region of interest" description="Disordered" evidence="2">
    <location>
        <begin position="423"/>
        <end position="445"/>
    </location>
</feature>
<feature type="region of interest" description="Disordered" evidence="2">
    <location>
        <begin position="505"/>
        <end position="524"/>
    </location>
</feature>
<feature type="region of interest" description="Disordered" evidence="2">
    <location>
        <begin position="552"/>
        <end position="573"/>
    </location>
</feature>
<feature type="coiled-coil region" evidence="1">
    <location>
        <begin position="85"/>
        <end position="150"/>
    </location>
</feature>
<feature type="coiled-coil region" evidence="1">
    <location>
        <begin position="209"/>
        <end position="421"/>
    </location>
</feature>
<feature type="compositionally biased region" description="Polar residues" evidence="2">
    <location>
        <begin position="38"/>
        <end position="50"/>
    </location>
</feature>
<feature type="compositionally biased region" description="Gly residues" evidence="2">
    <location>
        <begin position="508"/>
        <end position="520"/>
    </location>
</feature>
<protein>
    <recommendedName>
        <fullName>Golgin subfamily A member 8N</fullName>
    </recommendedName>
</protein>
<dbReference type="EMBL" id="AC123768">
    <property type="status" value="NOT_ANNOTATED_CDS"/>
    <property type="molecule type" value="Genomic_DNA"/>
</dbReference>
<dbReference type="CCDS" id="CCDS61578.1"/>
<dbReference type="RefSeq" id="NP_001269423.1">
    <property type="nucleotide sequence ID" value="NM_001282494.2"/>
</dbReference>
<dbReference type="SMR" id="F8WBI6"/>
<dbReference type="BioGRID" id="568980">
    <property type="interactions" value="2"/>
</dbReference>
<dbReference type="FunCoup" id="F8WBI6">
    <property type="interactions" value="13"/>
</dbReference>
<dbReference type="STRING" id="9606.ENSP00000398454"/>
<dbReference type="GlyGen" id="F8WBI6">
    <property type="glycosylation" value="1 site"/>
</dbReference>
<dbReference type="iPTMnet" id="F8WBI6"/>
<dbReference type="PhosphoSitePlus" id="F8WBI6"/>
<dbReference type="BioMuta" id="GOLGA8N"/>
<dbReference type="jPOST" id="F8WBI6"/>
<dbReference type="MassIVE" id="F8WBI6"/>
<dbReference type="PaxDb" id="9606-ENSP00000398454"/>
<dbReference type="PeptideAtlas" id="F8WBI6"/>
<dbReference type="Antibodypedia" id="66964">
    <property type="antibodies" value="10 antibodies from 2 providers"/>
</dbReference>
<dbReference type="DNASU" id="643699"/>
<dbReference type="Ensembl" id="ENST00000448387.7">
    <property type="protein sequence ID" value="ENSP00000398454.2"/>
    <property type="gene ID" value="ENSG00000232653.9"/>
</dbReference>
<dbReference type="GeneID" id="643699"/>
<dbReference type="KEGG" id="hsa:643699"/>
<dbReference type="MANE-Select" id="ENST00000448387.7">
    <property type="protein sequence ID" value="ENSP00000398454.2"/>
    <property type="RefSeq nucleotide sequence ID" value="NM_001282494.2"/>
    <property type="RefSeq protein sequence ID" value="NP_001269423.1"/>
</dbReference>
<dbReference type="UCSC" id="uc021sin.2">
    <property type="organism name" value="human"/>
</dbReference>
<dbReference type="AGR" id="HGNC:44405"/>
<dbReference type="CTD" id="643699"/>
<dbReference type="GeneCards" id="GOLGA8N"/>
<dbReference type="HGNC" id="HGNC:44405">
    <property type="gene designation" value="GOLGA8N"/>
</dbReference>
<dbReference type="HPA" id="ENSG00000232653">
    <property type="expression patterns" value="Low tissue specificity"/>
</dbReference>
<dbReference type="neXtProt" id="NX_F8WBI6"/>
<dbReference type="OpenTargets" id="ENSG00000232653"/>
<dbReference type="VEuPathDB" id="HostDB:ENSG00000232653"/>
<dbReference type="eggNOG" id="KOG4725">
    <property type="taxonomic scope" value="Eukaryota"/>
</dbReference>
<dbReference type="GeneTree" id="ENSGT00530000062932"/>
<dbReference type="InParanoid" id="F8WBI6"/>
<dbReference type="OMA" id="MNHTKRS"/>
<dbReference type="OrthoDB" id="9837597at2759"/>
<dbReference type="PAN-GO" id="F8WBI6">
    <property type="GO annotations" value="4 GO annotations based on evolutionary models"/>
</dbReference>
<dbReference type="PhylomeDB" id="F8WBI6"/>
<dbReference type="PathwayCommons" id="F8WBI6"/>
<dbReference type="SignaLink" id="F8WBI6"/>
<dbReference type="BioGRID-ORCS" id="643699">
    <property type="hits" value="150 hits in 574 CRISPR screens"/>
</dbReference>
<dbReference type="GenomeRNAi" id="643699"/>
<dbReference type="Pharos" id="F8WBI6">
    <property type="development level" value="Tdark"/>
</dbReference>
<dbReference type="PRO" id="PR:F8WBI6"/>
<dbReference type="Proteomes" id="UP000005640">
    <property type="component" value="Chromosome 15"/>
</dbReference>
<dbReference type="RNAct" id="F8WBI6">
    <property type="molecule type" value="protein"/>
</dbReference>
<dbReference type="Bgee" id="ENSG00000232653">
    <property type="expression patterns" value="Expressed in sural nerve and 98 other cell types or tissues"/>
</dbReference>
<dbReference type="ExpressionAtlas" id="F8WBI6">
    <property type="expression patterns" value="baseline and differential"/>
</dbReference>
<dbReference type="GO" id="GO:0005801">
    <property type="term" value="C:cis-Golgi network"/>
    <property type="evidence" value="ECO:0000318"/>
    <property type="project" value="GO_Central"/>
</dbReference>
<dbReference type="GO" id="GO:0000137">
    <property type="term" value="C:Golgi cis cisterna"/>
    <property type="evidence" value="ECO:0000318"/>
    <property type="project" value="GO_Central"/>
</dbReference>
<dbReference type="GO" id="GO:0032580">
    <property type="term" value="C:Golgi cisterna membrane"/>
    <property type="evidence" value="ECO:0000318"/>
    <property type="project" value="GO_Central"/>
</dbReference>
<dbReference type="GO" id="GO:0007030">
    <property type="term" value="P:Golgi organization"/>
    <property type="evidence" value="ECO:0000318"/>
    <property type="project" value="GO_Central"/>
</dbReference>
<dbReference type="InterPro" id="IPR043937">
    <property type="entry name" value="GM130_C"/>
</dbReference>
<dbReference type="InterPro" id="IPR043976">
    <property type="entry name" value="GOLGA_cons_dom"/>
</dbReference>
<dbReference type="InterPro" id="IPR024858">
    <property type="entry name" value="Golgin_A"/>
</dbReference>
<dbReference type="PANTHER" id="PTHR10881:SF62">
    <property type="entry name" value="GOLGIN SUBFAMILY A MEMBER 8H-RELATED"/>
    <property type="match status" value="1"/>
</dbReference>
<dbReference type="PANTHER" id="PTHR10881">
    <property type="entry name" value="GOLGIN SUBFAMILY A MEMBER-RELATED"/>
    <property type="match status" value="1"/>
</dbReference>
<dbReference type="Pfam" id="PF19046">
    <property type="entry name" value="GM130_C"/>
    <property type="match status" value="1"/>
</dbReference>
<dbReference type="Pfam" id="PF15070">
    <property type="entry name" value="GOLGA2L5"/>
    <property type="match status" value="2"/>
</dbReference>
<accession>F8WBI6</accession>
<name>GOG8N_HUMAN</name>
<reference key="1">
    <citation type="journal article" date="2006" name="Nature">
        <title>Analysis of the DNA sequence and duplication history of human chromosome 15.</title>
        <authorList>
            <person name="Zody M.C."/>
            <person name="Garber M."/>
            <person name="Sharpe T."/>
            <person name="Young S.K."/>
            <person name="Rowen L."/>
            <person name="O'Neill K."/>
            <person name="Whittaker C.A."/>
            <person name="Kamal M."/>
            <person name="Chang J.L."/>
            <person name="Cuomo C.A."/>
            <person name="Dewar K."/>
            <person name="FitzGerald M.G."/>
            <person name="Kodira C.D."/>
            <person name="Madan A."/>
            <person name="Qin S."/>
            <person name="Yang X."/>
            <person name="Abbasi N."/>
            <person name="Abouelleil A."/>
            <person name="Arachchi H.M."/>
            <person name="Baradarani L."/>
            <person name="Birditt B."/>
            <person name="Bloom S."/>
            <person name="Bloom T."/>
            <person name="Borowsky M.L."/>
            <person name="Burke J."/>
            <person name="Butler J."/>
            <person name="Cook A."/>
            <person name="DeArellano K."/>
            <person name="DeCaprio D."/>
            <person name="Dorris L. III"/>
            <person name="Dors M."/>
            <person name="Eichler E.E."/>
            <person name="Engels R."/>
            <person name="Fahey J."/>
            <person name="Fleetwood P."/>
            <person name="Friedman C."/>
            <person name="Gearin G."/>
            <person name="Hall J.L."/>
            <person name="Hensley G."/>
            <person name="Johnson E."/>
            <person name="Jones C."/>
            <person name="Kamat A."/>
            <person name="Kaur A."/>
            <person name="Locke D.P."/>
            <person name="Madan A."/>
            <person name="Munson G."/>
            <person name="Jaffe D.B."/>
            <person name="Lui A."/>
            <person name="Macdonald P."/>
            <person name="Mauceli E."/>
            <person name="Naylor J.W."/>
            <person name="Nesbitt R."/>
            <person name="Nicol R."/>
            <person name="O'Leary S.B."/>
            <person name="Ratcliffe A."/>
            <person name="Rounsley S."/>
            <person name="She X."/>
            <person name="Sneddon K.M.B."/>
            <person name="Stewart S."/>
            <person name="Sougnez C."/>
            <person name="Stone S.M."/>
            <person name="Topham K."/>
            <person name="Vincent D."/>
            <person name="Wang S."/>
            <person name="Zimmer A.R."/>
            <person name="Birren B.W."/>
            <person name="Hood L."/>
            <person name="Lander E.S."/>
            <person name="Nusbaum C."/>
        </authorList>
    </citation>
    <scope>NUCLEOTIDE SEQUENCE [LARGE SCALE GENOMIC DNA]</scope>
</reference>
<keyword id="KW-0175">Coiled coil</keyword>
<keyword id="KW-1185">Reference proteome</keyword>
<organism>
    <name type="scientific">Homo sapiens</name>
    <name type="common">Human</name>
    <dbReference type="NCBI Taxonomy" id="9606"/>
    <lineage>
        <taxon>Eukaryota</taxon>
        <taxon>Metazoa</taxon>
        <taxon>Chordata</taxon>
        <taxon>Craniata</taxon>
        <taxon>Vertebrata</taxon>
        <taxon>Euteleostomi</taxon>
        <taxon>Mammalia</taxon>
        <taxon>Eutheria</taxon>
        <taxon>Euarchontoglires</taxon>
        <taxon>Primates</taxon>
        <taxon>Haplorrhini</taxon>
        <taxon>Catarrhini</taxon>
        <taxon>Hominidae</taxon>
        <taxon>Homo</taxon>
    </lineage>
</organism>
<proteinExistence type="inferred from homology"/>
<gene>
    <name evidence="3" type="primary">GOLGA8N</name>
</gene>
<sequence>MAEETQHNKLAAAKKKLKEYWQKNRPRVPAGVNRNRKTNGSIPETATSGGCQPPGDSATGFHREGPTSSATLKDLESPCQERAVVLDSTSVKISRLKNTIKSLKQQKKQVEHQLEEEKKANNERQKAERELEVQIQTLIIQKEELNTDLYHMERSLRYFEEESKDLAVRLQHSLQCKGELESALSAVIATEKKKANQLSSCSKAHTEWELEQSLQDQALLKAQLTQLKESFQQLQLERDECAEHIEGERARWHQRMSKMSQEICTLKKEKQQDMRRVEELERSLSKLKNQMAEPLPPEPPAVPSEVELQHLRKELERVAGELQSQVKNNQHISLLNRRQEERIREQEERLRKQEERLQEQHEKLRQLAKPQSVFEELNNENKSTLQLEQQVKELQEKLGEEHLEAASQQNQQLTAQLSLMALPGEGHGGEHLDSEGEEAPQPMPSVPEDLESREAMSSFMDHLKEKADLSELVKKQELRFIQYWQERCHQKIHHLLSEPGGRAKDAALGGGHHQAGAQGGDEGEAAGAAADGIAAYSNYNNGHRKFLAAAHNSADEPGPGAPAPQELGAADKHGDLREVTLTSSAQGEAREDPLLDKPTAQPIVQDHQEHPGLGSNCCVPLFCWAWLPRRRR</sequence>
<evidence type="ECO:0000255" key="1"/>
<evidence type="ECO:0000256" key="2">
    <source>
        <dbReference type="SAM" id="MobiDB-lite"/>
    </source>
</evidence>
<evidence type="ECO:0000312" key="3">
    <source>
        <dbReference type="HGNC" id="HGNC:44405"/>
    </source>
</evidence>